<accession>Q6AQH5</accession>
<name>NHAA_DESPS</name>
<dbReference type="EMBL" id="CR522870">
    <property type="protein sequence ID" value="CAG35398.1"/>
    <property type="molecule type" value="Genomic_DNA"/>
</dbReference>
<dbReference type="RefSeq" id="WP_011187914.1">
    <property type="nucleotide sequence ID" value="NC_006138.1"/>
</dbReference>
<dbReference type="SMR" id="Q6AQH5"/>
<dbReference type="STRING" id="177439.DP0669"/>
<dbReference type="KEGG" id="dps:DP0669"/>
<dbReference type="eggNOG" id="COG3004">
    <property type="taxonomic scope" value="Bacteria"/>
</dbReference>
<dbReference type="HOGENOM" id="CLU_015803_1_0_7"/>
<dbReference type="OrthoDB" id="9808135at2"/>
<dbReference type="Proteomes" id="UP000000602">
    <property type="component" value="Chromosome"/>
</dbReference>
<dbReference type="GO" id="GO:0005886">
    <property type="term" value="C:plasma membrane"/>
    <property type="evidence" value="ECO:0007669"/>
    <property type="project" value="UniProtKB-SubCell"/>
</dbReference>
<dbReference type="GO" id="GO:0015385">
    <property type="term" value="F:sodium:proton antiporter activity"/>
    <property type="evidence" value="ECO:0007669"/>
    <property type="project" value="TreeGrafter"/>
</dbReference>
<dbReference type="GO" id="GO:0006885">
    <property type="term" value="P:regulation of pH"/>
    <property type="evidence" value="ECO:0007669"/>
    <property type="project" value="InterPro"/>
</dbReference>
<dbReference type="Gene3D" id="1.20.1530.10">
    <property type="entry name" value="Na+/H+ antiporter like domain"/>
    <property type="match status" value="1"/>
</dbReference>
<dbReference type="HAMAP" id="MF_01844">
    <property type="entry name" value="NhaA"/>
    <property type="match status" value="1"/>
</dbReference>
<dbReference type="InterPro" id="IPR023171">
    <property type="entry name" value="Na/H_antiporter_dom_sf"/>
</dbReference>
<dbReference type="InterPro" id="IPR004670">
    <property type="entry name" value="NhaA"/>
</dbReference>
<dbReference type="NCBIfam" id="TIGR00773">
    <property type="entry name" value="NhaA"/>
    <property type="match status" value="1"/>
</dbReference>
<dbReference type="NCBIfam" id="NF007111">
    <property type="entry name" value="PRK09560.1"/>
    <property type="match status" value="1"/>
</dbReference>
<dbReference type="NCBIfam" id="NF007112">
    <property type="entry name" value="PRK09561.1"/>
    <property type="match status" value="1"/>
</dbReference>
<dbReference type="PANTHER" id="PTHR30341:SF0">
    <property type="entry name" value="NA(+)_H(+) ANTIPORTER NHAA"/>
    <property type="match status" value="1"/>
</dbReference>
<dbReference type="PANTHER" id="PTHR30341">
    <property type="entry name" value="SODIUM ION/PROTON ANTIPORTER NHAA-RELATED"/>
    <property type="match status" value="1"/>
</dbReference>
<dbReference type="Pfam" id="PF06965">
    <property type="entry name" value="Na_H_antiport_1"/>
    <property type="match status" value="1"/>
</dbReference>
<reference key="1">
    <citation type="journal article" date="2004" name="Environ. Microbiol.">
        <title>The genome of Desulfotalea psychrophila, a sulfate-reducing bacterium from permanently cold Arctic sediments.</title>
        <authorList>
            <person name="Rabus R."/>
            <person name="Ruepp A."/>
            <person name="Frickey T."/>
            <person name="Rattei T."/>
            <person name="Fartmann B."/>
            <person name="Stark M."/>
            <person name="Bauer M."/>
            <person name="Zibat A."/>
            <person name="Lombardot T."/>
            <person name="Becker I."/>
            <person name="Amann J."/>
            <person name="Gellner K."/>
            <person name="Teeling H."/>
            <person name="Leuschner W.D."/>
            <person name="Gloeckner F.-O."/>
            <person name="Lupas A.N."/>
            <person name="Amann R."/>
            <person name="Klenk H.-P."/>
        </authorList>
    </citation>
    <scope>NUCLEOTIDE SEQUENCE [LARGE SCALE GENOMIC DNA]</scope>
    <source>
        <strain>DSM 12343 / LSv54</strain>
    </source>
</reference>
<proteinExistence type="inferred from homology"/>
<keyword id="KW-0050">Antiport</keyword>
<keyword id="KW-0997">Cell inner membrane</keyword>
<keyword id="KW-1003">Cell membrane</keyword>
<keyword id="KW-0406">Ion transport</keyword>
<keyword id="KW-0472">Membrane</keyword>
<keyword id="KW-1185">Reference proteome</keyword>
<keyword id="KW-0915">Sodium</keyword>
<keyword id="KW-0739">Sodium transport</keyword>
<keyword id="KW-0812">Transmembrane</keyword>
<keyword id="KW-1133">Transmembrane helix</keyword>
<keyword id="KW-0813">Transport</keyword>
<sequence>MGTQKEKKSVFALLKSNSIGGILLMLATALALIMANSPGHYLYSMLITTPVEVRFGPLEIAKPLLLWINDGLMAGFFFLVGLELKREIFEGGLSQRSNIILPAIGALGGMVVPSCIYLAFNYQDPVALRGWAIPAATDIAFALGILSLLGSRVPTSLKILLTTLAIFDDIGAILIIACFYTNDIYLPGLLIALLCMLILFIVNRCKVERTTVYIFIGSIMWIAMLKSGVHATLAGVILAMFIPMYSRKHPGQSPLKNLEHDLQGTATFIILPIFAFANSGINLTNISMDFFTHAVPMGIALGLFIGKPLGIISFLWVGVQLRLTKLPVDLNWSTVTGMSALAGIGFTMSLFVGSLAFDQAITGLIFDERLGIIMGSLFSGLLGYLLLNKTLPGDKHEM</sequence>
<evidence type="ECO:0000255" key="1">
    <source>
        <dbReference type="HAMAP-Rule" id="MF_01844"/>
    </source>
</evidence>
<feature type="chain" id="PRO_0000334276" description="Na(+)/H(+) antiporter NhaA">
    <location>
        <begin position="1"/>
        <end position="398"/>
    </location>
</feature>
<feature type="transmembrane region" description="Helical" evidence="1">
    <location>
        <begin position="19"/>
        <end position="39"/>
    </location>
</feature>
<feature type="transmembrane region" description="Helical" evidence="1">
    <location>
        <begin position="64"/>
        <end position="84"/>
    </location>
</feature>
<feature type="transmembrane region" description="Helical" evidence="1">
    <location>
        <begin position="99"/>
        <end position="119"/>
    </location>
</feature>
<feature type="transmembrane region" description="Helical" evidence="1">
    <location>
        <begin position="130"/>
        <end position="150"/>
    </location>
</feature>
<feature type="transmembrane region" description="Helical" evidence="1">
    <location>
        <begin position="159"/>
        <end position="179"/>
    </location>
</feature>
<feature type="transmembrane region" description="Helical" evidence="1">
    <location>
        <begin position="182"/>
        <end position="202"/>
    </location>
</feature>
<feature type="transmembrane region" description="Helical" evidence="1">
    <location>
        <begin position="222"/>
        <end position="242"/>
    </location>
</feature>
<feature type="transmembrane region" description="Helical" evidence="1">
    <location>
        <begin position="266"/>
        <end position="286"/>
    </location>
</feature>
<feature type="transmembrane region" description="Helical" evidence="1">
    <location>
        <begin position="299"/>
        <end position="319"/>
    </location>
</feature>
<feature type="transmembrane region" description="Helical" evidence="1">
    <location>
        <begin position="337"/>
        <end position="357"/>
    </location>
</feature>
<feature type="transmembrane region" description="Helical" evidence="1">
    <location>
        <begin position="370"/>
        <end position="390"/>
    </location>
</feature>
<comment type="function">
    <text evidence="1">Na(+)/H(+) antiporter that extrudes sodium in exchange for external protons.</text>
</comment>
<comment type="catalytic activity">
    <reaction evidence="1">
        <text>Na(+)(in) + 2 H(+)(out) = Na(+)(out) + 2 H(+)(in)</text>
        <dbReference type="Rhea" id="RHEA:29251"/>
        <dbReference type="ChEBI" id="CHEBI:15378"/>
        <dbReference type="ChEBI" id="CHEBI:29101"/>
    </reaction>
    <physiologicalReaction direction="left-to-right" evidence="1">
        <dbReference type="Rhea" id="RHEA:29252"/>
    </physiologicalReaction>
</comment>
<comment type="subcellular location">
    <subcellularLocation>
        <location evidence="1">Cell inner membrane</location>
        <topology evidence="1">Multi-pass membrane protein</topology>
    </subcellularLocation>
</comment>
<comment type="similarity">
    <text evidence="1">Belongs to the NhaA Na(+)/H(+) (TC 2.A.33) antiporter family.</text>
</comment>
<organism>
    <name type="scientific">Desulfotalea psychrophila (strain LSv54 / DSM 12343)</name>
    <dbReference type="NCBI Taxonomy" id="177439"/>
    <lineage>
        <taxon>Bacteria</taxon>
        <taxon>Pseudomonadati</taxon>
        <taxon>Thermodesulfobacteriota</taxon>
        <taxon>Desulfobulbia</taxon>
        <taxon>Desulfobulbales</taxon>
        <taxon>Desulfocapsaceae</taxon>
        <taxon>Desulfotalea</taxon>
    </lineage>
</organism>
<gene>
    <name evidence="1" type="primary">nhaA</name>
    <name type="ordered locus">DP0669</name>
</gene>
<protein>
    <recommendedName>
        <fullName evidence="1">Na(+)/H(+) antiporter NhaA</fullName>
    </recommendedName>
    <alternativeName>
        <fullName evidence="1">Sodium/proton antiporter NhaA</fullName>
    </alternativeName>
</protein>